<name>MRAZ_MESFL</name>
<proteinExistence type="inferred from homology"/>
<organism>
    <name type="scientific">Mesoplasma florum (strain ATCC 33453 / NBRC 100688 / NCTC 11704 / L1)</name>
    <name type="common">Acholeplasma florum</name>
    <dbReference type="NCBI Taxonomy" id="265311"/>
    <lineage>
        <taxon>Bacteria</taxon>
        <taxon>Bacillati</taxon>
        <taxon>Mycoplasmatota</taxon>
        <taxon>Mollicutes</taxon>
        <taxon>Entomoplasmatales</taxon>
        <taxon>Entomoplasmataceae</taxon>
        <taxon>Mesoplasma</taxon>
    </lineage>
</organism>
<dbReference type="EMBL" id="AE017263">
    <property type="protein sequence ID" value="AAT75754.1"/>
    <property type="status" value="ALT_INIT"/>
    <property type="molecule type" value="Genomic_DNA"/>
</dbReference>
<dbReference type="RefSeq" id="WP_011183294.1">
    <property type="nucleotide sequence ID" value="NC_006055.1"/>
</dbReference>
<dbReference type="RefSeq" id="YP_053638.1">
    <property type="nucleotide sequence ID" value="NC_006055.1"/>
</dbReference>
<dbReference type="SMR" id="Q6F169"/>
<dbReference type="STRING" id="265311.Mfl395"/>
<dbReference type="PaxDb" id="265311-Mfl395"/>
<dbReference type="EnsemblBacteria" id="AAT75754">
    <property type="protein sequence ID" value="AAT75754"/>
    <property type="gene ID" value="Mfl395"/>
</dbReference>
<dbReference type="GeneID" id="2898030"/>
<dbReference type="KEGG" id="mfl:Mfl395"/>
<dbReference type="PATRIC" id="fig|265311.5.peg.395"/>
<dbReference type="eggNOG" id="COG2001">
    <property type="taxonomic scope" value="Bacteria"/>
</dbReference>
<dbReference type="HOGENOM" id="CLU_107907_0_0_14"/>
<dbReference type="OrthoDB" id="9807753at2"/>
<dbReference type="Proteomes" id="UP000006647">
    <property type="component" value="Chromosome"/>
</dbReference>
<dbReference type="GO" id="GO:0005737">
    <property type="term" value="C:cytoplasm"/>
    <property type="evidence" value="ECO:0007669"/>
    <property type="project" value="UniProtKB-UniRule"/>
</dbReference>
<dbReference type="GO" id="GO:0009295">
    <property type="term" value="C:nucleoid"/>
    <property type="evidence" value="ECO:0007669"/>
    <property type="project" value="UniProtKB-SubCell"/>
</dbReference>
<dbReference type="GO" id="GO:0003700">
    <property type="term" value="F:DNA-binding transcription factor activity"/>
    <property type="evidence" value="ECO:0007669"/>
    <property type="project" value="UniProtKB-UniRule"/>
</dbReference>
<dbReference type="GO" id="GO:0000976">
    <property type="term" value="F:transcription cis-regulatory region binding"/>
    <property type="evidence" value="ECO:0007669"/>
    <property type="project" value="TreeGrafter"/>
</dbReference>
<dbReference type="GO" id="GO:2000143">
    <property type="term" value="P:negative regulation of DNA-templated transcription initiation"/>
    <property type="evidence" value="ECO:0007669"/>
    <property type="project" value="TreeGrafter"/>
</dbReference>
<dbReference type="CDD" id="cd16321">
    <property type="entry name" value="MraZ_C"/>
    <property type="match status" value="1"/>
</dbReference>
<dbReference type="CDD" id="cd16320">
    <property type="entry name" value="MraZ_N"/>
    <property type="match status" value="1"/>
</dbReference>
<dbReference type="Gene3D" id="3.40.1550.20">
    <property type="entry name" value="Transcriptional regulator MraZ domain"/>
    <property type="match status" value="1"/>
</dbReference>
<dbReference type="HAMAP" id="MF_01008">
    <property type="entry name" value="MraZ"/>
    <property type="match status" value="1"/>
</dbReference>
<dbReference type="InterPro" id="IPR003444">
    <property type="entry name" value="MraZ"/>
</dbReference>
<dbReference type="InterPro" id="IPR035644">
    <property type="entry name" value="MraZ_C"/>
</dbReference>
<dbReference type="InterPro" id="IPR020603">
    <property type="entry name" value="MraZ_dom"/>
</dbReference>
<dbReference type="InterPro" id="IPR035642">
    <property type="entry name" value="MraZ_N"/>
</dbReference>
<dbReference type="InterPro" id="IPR038619">
    <property type="entry name" value="MraZ_sf"/>
</dbReference>
<dbReference type="InterPro" id="IPR007159">
    <property type="entry name" value="SpoVT-AbrB_dom"/>
</dbReference>
<dbReference type="InterPro" id="IPR037914">
    <property type="entry name" value="SpoVT-AbrB_sf"/>
</dbReference>
<dbReference type="NCBIfam" id="TIGR00242">
    <property type="entry name" value="division/cell wall cluster transcriptional repressor MraZ"/>
    <property type="match status" value="1"/>
</dbReference>
<dbReference type="PANTHER" id="PTHR34701">
    <property type="entry name" value="TRANSCRIPTIONAL REGULATOR MRAZ"/>
    <property type="match status" value="1"/>
</dbReference>
<dbReference type="PANTHER" id="PTHR34701:SF1">
    <property type="entry name" value="TRANSCRIPTIONAL REGULATOR MRAZ"/>
    <property type="match status" value="1"/>
</dbReference>
<dbReference type="Pfam" id="PF02381">
    <property type="entry name" value="MraZ"/>
    <property type="match status" value="2"/>
</dbReference>
<dbReference type="SUPFAM" id="SSF89447">
    <property type="entry name" value="AbrB/MazE/MraZ-like"/>
    <property type="match status" value="1"/>
</dbReference>
<dbReference type="PROSITE" id="PS51740">
    <property type="entry name" value="SPOVT_ABRB"/>
    <property type="match status" value="2"/>
</dbReference>
<accession>Q6F169</accession>
<feature type="chain" id="PRO_0000108499" description="Transcriptional regulator MraZ">
    <location>
        <begin position="1"/>
        <end position="146"/>
    </location>
</feature>
<feature type="domain" description="SpoVT-AbrB 1" evidence="2">
    <location>
        <begin position="6"/>
        <end position="49"/>
    </location>
</feature>
<feature type="domain" description="SpoVT-AbrB 2" evidence="2">
    <location>
        <begin position="78"/>
        <end position="121"/>
    </location>
</feature>
<gene>
    <name evidence="1" type="primary">mraZ</name>
    <name type="ordered locus">Mfl395</name>
</gene>
<protein>
    <recommendedName>
        <fullName>Transcriptional regulator MraZ</fullName>
    </recommendedName>
</protein>
<keyword id="KW-0963">Cytoplasm</keyword>
<keyword id="KW-0238">DNA-binding</keyword>
<keyword id="KW-1185">Reference proteome</keyword>
<keyword id="KW-0677">Repeat</keyword>
<keyword id="KW-0804">Transcription</keyword>
<keyword id="KW-0805">Transcription regulation</keyword>
<comment type="subunit">
    <text evidence="1">Forms oligomers.</text>
</comment>
<comment type="subcellular location">
    <subcellularLocation>
        <location evidence="1">Cytoplasm</location>
        <location evidence="1">Nucleoid</location>
    </subcellularLocation>
</comment>
<comment type="similarity">
    <text evidence="1">Belongs to the MraZ family.</text>
</comment>
<comment type="sequence caution" evidence="3">
    <conflict type="erroneous initiation">
        <sequence resource="EMBL-CDS" id="AAT75754"/>
    </conflict>
</comment>
<evidence type="ECO:0000255" key="1">
    <source>
        <dbReference type="HAMAP-Rule" id="MF_01008"/>
    </source>
</evidence>
<evidence type="ECO:0000255" key="2">
    <source>
        <dbReference type="PROSITE-ProRule" id="PRU01076"/>
    </source>
</evidence>
<evidence type="ECO:0000305" key="3"/>
<sequence>MLFFGTYDHNLDDKQRLTIPSKMRNKILNSTVYVSKGFEGSLEMRTEEEFEKWSSQILNLSSFNKETRMITREIIANTHEVEIDKIGRIKIPNNLLKLANIEKSVYILGMGDRVEIWDQKSYDNYQNDNSDRMEEIAETIYQGLNK</sequence>
<reference key="1">
    <citation type="submission" date="2004-06" db="EMBL/GenBank/DDBJ databases">
        <authorList>
            <person name="Birren B.W."/>
            <person name="Stange-Thomann N."/>
            <person name="Hafez N."/>
            <person name="DeCaprio D."/>
            <person name="Fisher S."/>
            <person name="Butler J."/>
            <person name="Elkins T."/>
            <person name="Kodira C.D."/>
            <person name="Major J."/>
            <person name="Wang S."/>
            <person name="Nicol R."/>
            <person name="Nusbaum C."/>
        </authorList>
    </citation>
    <scope>NUCLEOTIDE SEQUENCE [LARGE SCALE GENOMIC DNA]</scope>
    <source>
        <strain>ATCC 33453 / NBRC 100688 / NCTC 11704 / L1</strain>
    </source>
</reference>